<protein>
    <recommendedName>
        <fullName>Myosin-1</fullName>
    </recommendedName>
    <alternativeName>
        <fullName>Class I unconventional myosin</fullName>
    </alternativeName>
    <alternativeName>
        <fullName>Type I myosin</fullName>
    </alternativeName>
</protein>
<reference key="1">
    <citation type="journal article" date="2003" name="Plant Cell">
        <title>A class-V myosin required for mating, hyphal growth, and pathogenicity in the dimorphic plant pathogen Ustilago maydis.</title>
        <authorList>
            <person name="Weber I."/>
            <person name="Gruber C."/>
            <person name="Steinberg G."/>
        </authorList>
    </citation>
    <scope>NUCLEOTIDE SEQUENCE [GENOMIC DNA]</scope>
</reference>
<reference key="2">
    <citation type="journal article" date="2006" name="Nature">
        <title>Insights from the genome of the biotrophic fungal plant pathogen Ustilago maydis.</title>
        <authorList>
            <person name="Kaemper J."/>
            <person name="Kahmann R."/>
            <person name="Boelker M."/>
            <person name="Ma L.-J."/>
            <person name="Brefort T."/>
            <person name="Saville B.J."/>
            <person name="Banuett F."/>
            <person name="Kronstad J.W."/>
            <person name="Gold S.E."/>
            <person name="Mueller O."/>
            <person name="Perlin M.H."/>
            <person name="Woesten H.A.B."/>
            <person name="de Vries R."/>
            <person name="Ruiz-Herrera J."/>
            <person name="Reynaga-Pena C.G."/>
            <person name="Snetselaar K."/>
            <person name="McCann M."/>
            <person name="Perez-Martin J."/>
            <person name="Feldbruegge M."/>
            <person name="Basse C.W."/>
            <person name="Steinberg G."/>
            <person name="Ibeas J.I."/>
            <person name="Holloman W."/>
            <person name="Guzman P."/>
            <person name="Farman M.L."/>
            <person name="Stajich J.E."/>
            <person name="Sentandreu R."/>
            <person name="Gonzalez-Prieto J.M."/>
            <person name="Kennell J.C."/>
            <person name="Molina L."/>
            <person name="Schirawski J."/>
            <person name="Mendoza-Mendoza A."/>
            <person name="Greilinger D."/>
            <person name="Muench K."/>
            <person name="Roessel N."/>
            <person name="Scherer M."/>
            <person name="Vranes M."/>
            <person name="Ladendorf O."/>
            <person name="Vincon V."/>
            <person name="Fuchs U."/>
            <person name="Sandrock B."/>
            <person name="Meng S."/>
            <person name="Ho E.C.H."/>
            <person name="Cahill M.J."/>
            <person name="Boyce K.J."/>
            <person name="Klose J."/>
            <person name="Klosterman S.J."/>
            <person name="Deelstra H.J."/>
            <person name="Ortiz-Castellanos L."/>
            <person name="Li W."/>
            <person name="Sanchez-Alonso P."/>
            <person name="Schreier P.H."/>
            <person name="Haeuser-Hahn I."/>
            <person name="Vaupel M."/>
            <person name="Koopmann E."/>
            <person name="Friedrich G."/>
            <person name="Voss H."/>
            <person name="Schlueter T."/>
            <person name="Margolis J."/>
            <person name="Platt D."/>
            <person name="Swimmer C."/>
            <person name="Gnirke A."/>
            <person name="Chen F."/>
            <person name="Vysotskaia V."/>
            <person name="Mannhaupt G."/>
            <person name="Gueldener U."/>
            <person name="Muensterkoetter M."/>
            <person name="Haase D."/>
            <person name="Oesterheld M."/>
            <person name="Mewes H.-W."/>
            <person name="Mauceli E.W."/>
            <person name="DeCaprio D."/>
            <person name="Wade C.M."/>
            <person name="Butler J."/>
            <person name="Young S.K."/>
            <person name="Jaffe D.B."/>
            <person name="Calvo S.E."/>
            <person name="Nusbaum C."/>
            <person name="Galagan J.E."/>
            <person name="Birren B.W."/>
        </authorList>
    </citation>
    <scope>NUCLEOTIDE SEQUENCE [LARGE SCALE GENOMIC DNA]</scope>
    <source>
        <strain>DSM 14603 / FGSC 9021 / UM521</strain>
    </source>
</reference>
<reference key="3">
    <citation type="submission" date="2014-09" db="EMBL/GenBank/DDBJ databases">
        <authorList>
            <person name="Gueldener U."/>
            <person name="Muensterkoetter M."/>
            <person name="Walter M.C."/>
            <person name="Mannhaupt G."/>
            <person name="Kahmann R."/>
        </authorList>
    </citation>
    <scope>GENOME REANNOTATION</scope>
    <source>
        <strain>DSM 14603 / FGSC 9021 / UM521</strain>
    </source>
</reference>
<organism>
    <name type="scientific">Mycosarcoma maydis</name>
    <name type="common">Corn smut fungus</name>
    <name type="synonym">Ustilago maydis</name>
    <dbReference type="NCBI Taxonomy" id="5270"/>
    <lineage>
        <taxon>Eukaryota</taxon>
        <taxon>Fungi</taxon>
        <taxon>Dikarya</taxon>
        <taxon>Basidiomycota</taxon>
        <taxon>Ustilaginomycotina</taxon>
        <taxon>Ustilaginomycetes</taxon>
        <taxon>Ustilaginales</taxon>
        <taxon>Ustilaginaceae</taxon>
        <taxon>Mycosarcoma</taxon>
    </lineage>
</organism>
<feature type="chain" id="PRO_0000338562" description="Myosin-1">
    <location>
        <begin position="1"/>
        <end position="1282"/>
    </location>
</feature>
<feature type="domain" description="Myosin motor" evidence="4">
    <location>
        <begin position="44"/>
        <end position="723"/>
    </location>
</feature>
<feature type="domain" description="IQ 1">
    <location>
        <begin position="727"/>
        <end position="747"/>
    </location>
</feature>
<feature type="domain" description="IQ 2">
    <location>
        <begin position="748"/>
        <end position="773"/>
    </location>
</feature>
<feature type="domain" description="TH1" evidence="5">
    <location>
        <begin position="781"/>
        <end position="977"/>
    </location>
</feature>
<feature type="domain" description="SH3" evidence="3">
    <location>
        <begin position="1074"/>
        <end position="1135"/>
    </location>
</feature>
<feature type="region of interest" description="Disordered" evidence="6">
    <location>
        <begin position="1"/>
        <end position="30"/>
    </location>
</feature>
<feature type="region of interest" description="Actin-binding" evidence="1">
    <location>
        <begin position="412"/>
        <end position="494"/>
    </location>
</feature>
<feature type="region of interest" description="Disordered" evidence="6">
    <location>
        <begin position="569"/>
        <end position="590"/>
    </location>
</feature>
<feature type="region of interest" description="Disordered" evidence="6">
    <location>
        <begin position="973"/>
        <end position="1073"/>
    </location>
</feature>
<feature type="region of interest" description="Disordered" evidence="6">
    <location>
        <begin position="1237"/>
        <end position="1282"/>
    </location>
</feature>
<feature type="compositionally biased region" description="Low complexity" evidence="6">
    <location>
        <begin position="1029"/>
        <end position="1058"/>
    </location>
</feature>
<feature type="compositionally biased region" description="Pro residues" evidence="6">
    <location>
        <begin position="1059"/>
        <end position="1068"/>
    </location>
</feature>
<feature type="compositionally biased region" description="Low complexity" evidence="6">
    <location>
        <begin position="1252"/>
        <end position="1269"/>
    </location>
</feature>
<feature type="binding site" evidence="2">
    <location>
        <begin position="137"/>
        <end position="144"/>
    </location>
    <ligand>
        <name>ATP</name>
        <dbReference type="ChEBI" id="CHEBI:30616"/>
    </ligand>
</feature>
<feature type="modified residue" description="Phosphoserine" evidence="1">
    <location>
        <position position="365"/>
    </location>
</feature>
<comment type="function">
    <text evidence="1">Type-I myosin implicated in the organization of the actin cytoskeleton. Required for proper actin cytoskeleton polarization. At the cell cortex, assembles in patch-like structures together with proteins from the actin-polymerizing machinery and promotes actin assembly. Functions as actin nucleation-promoting factor (NPF) for the Arp2/3 complex (By similarity).</text>
</comment>
<comment type="subcellular location">
    <subcellularLocation>
        <location evidence="1">Cytoplasm</location>
        <location evidence="1">Cytoskeleton</location>
        <location evidence="1">Actin patch</location>
    </subcellularLocation>
</comment>
<comment type="domain">
    <text evidence="1">The myosin motor domain displays actin-stimulated ATPase activity and generates a mechanochemical force.</text>
</comment>
<comment type="domain">
    <text evidence="1">The tail domain participates in molecular interactions that specify the role of the motor domain (By similarity). It is composed of several tail homology (TH) domains, namely a putative phospholipid-binding myosin tail domain (also named TH1), an Ala- and Pro-rich domain (TH2), followed by an SH3 domain and a C-terminal acidic domain (TH3).</text>
</comment>
<comment type="PTM">
    <text evidence="1">Phosphorylation of the TEDS site (Ser-365) is required for the polarization of the actin cytoskeleton. Phosphorylation probably activates the myosin-I ATPase activity (By similarity).</text>
</comment>
<comment type="similarity">
    <text evidence="7">Belongs to the TRAFAC class myosin-kinesin ATPase superfamily. Myosin family.</text>
</comment>
<evidence type="ECO:0000250" key="1"/>
<evidence type="ECO:0000255" key="2"/>
<evidence type="ECO:0000255" key="3">
    <source>
        <dbReference type="PROSITE-ProRule" id="PRU00192"/>
    </source>
</evidence>
<evidence type="ECO:0000255" key="4">
    <source>
        <dbReference type="PROSITE-ProRule" id="PRU00782"/>
    </source>
</evidence>
<evidence type="ECO:0000255" key="5">
    <source>
        <dbReference type="PROSITE-ProRule" id="PRU01093"/>
    </source>
</evidence>
<evidence type="ECO:0000256" key="6">
    <source>
        <dbReference type="SAM" id="MobiDB-lite"/>
    </source>
</evidence>
<evidence type="ECO:0000305" key="7"/>
<gene>
    <name type="primary">myo1</name>
    <name type="ORF">UMAG_11115</name>
</gene>
<name>MYO1_MYCMD</name>
<keyword id="KW-0009">Actin-binding</keyword>
<keyword id="KW-0067">ATP-binding</keyword>
<keyword id="KW-0963">Cytoplasm</keyword>
<keyword id="KW-0206">Cytoskeleton</keyword>
<keyword id="KW-0378">Hydrolase</keyword>
<keyword id="KW-0505">Motor protein</keyword>
<keyword id="KW-0518">Myosin</keyword>
<keyword id="KW-0547">Nucleotide-binding</keyword>
<keyword id="KW-0597">Phosphoprotein</keyword>
<keyword id="KW-1185">Reference proteome</keyword>
<keyword id="KW-0677">Repeat</keyword>
<keyword id="KW-0728">SH3 domain</keyword>
<dbReference type="EMBL" id="AJ577237">
    <property type="protein sequence ID" value="CAE11865.1"/>
    <property type="molecule type" value="Genomic_DNA"/>
</dbReference>
<dbReference type="EMBL" id="CM003151">
    <property type="protein sequence ID" value="KIS67611.1"/>
    <property type="molecule type" value="Genomic_DNA"/>
</dbReference>
<dbReference type="RefSeq" id="XP_011390802.1">
    <property type="nucleotide sequence ID" value="XM_011392500.1"/>
</dbReference>
<dbReference type="SMR" id="Q7Z8J6"/>
<dbReference type="FunCoup" id="Q7Z8J6">
    <property type="interactions" value="93"/>
</dbReference>
<dbReference type="STRING" id="237631.Q7Z8J6"/>
<dbReference type="EnsemblFungi" id="KIS67611">
    <property type="protein sequence ID" value="KIS67611"/>
    <property type="gene ID" value="UMAG_11115"/>
</dbReference>
<dbReference type="GeneID" id="23567041"/>
<dbReference type="KEGG" id="uma:UMAG_11115"/>
<dbReference type="VEuPathDB" id="FungiDB:UMAG_11115"/>
<dbReference type="InParanoid" id="Q7Z8J6"/>
<dbReference type="OrthoDB" id="6108017at2759"/>
<dbReference type="Proteomes" id="UP000000561">
    <property type="component" value="Chromosome 12"/>
</dbReference>
<dbReference type="GO" id="GO:0030479">
    <property type="term" value="C:actin cortical patch"/>
    <property type="evidence" value="ECO:0000318"/>
    <property type="project" value="GO_Central"/>
</dbReference>
<dbReference type="GO" id="GO:0015629">
    <property type="term" value="C:actin cytoskeleton"/>
    <property type="evidence" value="ECO:0000318"/>
    <property type="project" value="GO_Central"/>
</dbReference>
<dbReference type="GO" id="GO:0051285">
    <property type="term" value="C:cell cortex of cell tip"/>
    <property type="evidence" value="ECO:0007669"/>
    <property type="project" value="EnsemblFungi"/>
</dbReference>
<dbReference type="GO" id="GO:0051286">
    <property type="term" value="C:cell tip"/>
    <property type="evidence" value="ECO:0000318"/>
    <property type="project" value="GO_Central"/>
</dbReference>
<dbReference type="GO" id="GO:0005737">
    <property type="term" value="C:cytoplasm"/>
    <property type="evidence" value="ECO:0000318"/>
    <property type="project" value="GO_Central"/>
</dbReference>
<dbReference type="GO" id="GO:0043332">
    <property type="term" value="C:mating projection tip"/>
    <property type="evidence" value="ECO:0007669"/>
    <property type="project" value="EnsemblFungi"/>
</dbReference>
<dbReference type="GO" id="GO:0031097">
    <property type="term" value="C:medial cortex"/>
    <property type="evidence" value="ECO:0007669"/>
    <property type="project" value="EnsemblFungi"/>
</dbReference>
<dbReference type="GO" id="GO:0005902">
    <property type="term" value="C:microvillus"/>
    <property type="evidence" value="ECO:0000318"/>
    <property type="project" value="GO_Central"/>
</dbReference>
<dbReference type="GO" id="GO:0045160">
    <property type="term" value="C:myosin I complex"/>
    <property type="evidence" value="ECO:0007669"/>
    <property type="project" value="EnsemblFungi"/>
</dbReference>
<dbReference type="GO" id="GO:0005886">
    <property type="term" value="C:plasma membrane"/>
    <property type="evidence" value="ECO:0000318"/>
    <property type="project" value="GO_Central"/>
</dbReference>
<dbReference type="GO" id="GO:0044853">
    <property type="term" value="C:plasma membrane raft"/>
    <property type="evidence" value="ECO:0007669"/>
    <property type="project" value="EnsemblFungi"/>
</dbReference>
<dbReference type="GO" id="GO:0051015">
    <property type="term" value="F:actin filament binding"/>
    <property type="evidence" value="ECO:0000318"/>
    <property type="project" value="GO_Central"/>
</dbReference>
<dbReference type="GO" id="GO:0071933">
    <property type="term" value="F:Arp2/3 complex binding"/>
    <property type="evidence" value="ECO:0007669"/>
    <property type="project" value="EnsemblFungi"/>
</dbReference>
<dbReference type="GO" id="GO:0005524">
    <property type="term" value="F:ATP binding"/>
    <property type="evidence" value="ECO:0007669"/>
    <property type="project" value="UniProtKB-KW"/>
</dbReference>
<dbReference type="GO" id="GO:0016787">
    <property type="term" value="F:hydrolase activity"/>
    <property type="evidence" value="ECO:0007669"/>
    <property type="project" value="UniProtKB-KW"/>
</dbReference>
<dbReference type="GO" id="GO:0000146">
    <property type="term" value="F:microfilament motor activity"/>
    <property type="evidence" value="ECO:0000318"/>
    <property type="project" value="GO_Central"/>
</dbReference>
<dbReference type="GO" id="GO:0000147">
    <property type="term" value="P:actin cortical patch assembly"/>
    <property type="evidence" value="ECO:0007669"/>
    <property type="project" value="EnsemblFungi"/>
</dbReference>
<dbReference type="GO" id="GO:0051666">
    <property type="term" value="P:actin cortical patch localization"/>
    <property type="evidence" value="ECO:0000318"/>
    <property type="project" value="GO_Central"/>
</dbReference>
<dbReference type="GO" id="GO:0007015">
    <property type="term" value="P:actin filament organization"/>
    <property type="evidence" value="ECO:0000318"/>
    <property type="project" value="GO_Central"/>
</dbReference>
<dbReference type="GO" id="GO:0006897">
    <property type="term" value="P:endocytosis"/>
    <property type="evidence" value="ECO:0000318"/>
    <property type="project" value="GO_Central"/>
</dbReference>
<dbReference type="GO" id="GO:0000281">
    <property type="term" value="P:mitotic cytokinesis"/>
    <property type="evidence" value="ECO:0007669"/>
    <property type="project" value="EnsemblFungi"/>
</dbReference>
<dbReference type="CDD" id="cd01378">
    <property type="entry name" value="MYSc_Myo1"/>
    <property type="match status" value="1"/>
</dbReference>
<dbReference type="CDD" id="cd11858">
    <property type="entry name" value="SH3_Myosin-I_fungi"/>
    <property type="match status" value="1"/>
</dbReference>
<dbReference type="FunFam" id="1.10.10.820:FF:000001">
    <property type="entry name" value="Myosin heavy chain"/>
    <property type="match status" value="1"/>
</dbReference>
<dbReference type="FunFam" id="1.20.120.720:FF:000015">
    <property type="entry name" value="Myosin I"/>
    <property type="match status" value="1"/>
</dbReference>
<dbReference type="FunFam" id="1.20.5.4820:FF:000004">
    <property type="entry name" value="Myosin IE"/>
    <property type="match status" value="1"/>
</dbReference>
<dbReference type="FunFam" id="1.20.58.530:FF:000007">
    <property type="entry name" value="Myosin IE"/>
    <property type="match status" value="1"/>
</dbReference>
<dbReference type="Gene3D" id="1.10.10.820">
    <property type="match status" value="1"/>
</dbReference>
<dbReference type="Gene3D" id="1.20.5.4820">
    <property type="match status" value="1"/>
</dbReference>
<dbReference type="Gene3D" id="1.20.58.530">
    <property type="match status" value="1"/>
</dbReference>
<dbReference type="Gene3D" id="3.40.850.10">
    <property type="entry name" value="Kinesin motor domain"/>
    <property type="match status" value="1"/>
</dbReference>
<dbReference type="Gene3D" id="1.20.120.720">
    <property type="entry name" value="Myosin VI head, motor domain, U50 subdomain"/>
    <property type="match status" value="1"/>
</dbReference>
<dbReference type="Gene3D" id="2.30.30.40">
    <property type="entry name" value="SH3 Domains"/>
    <property type="match status" value="1"/>
</dbReference>
<dbReference type="InterPro" id="IPR035535">
    <property type="entry name" value="Fungal_myosin-I_SH3"/>
</dbReference>
<dbReference type="InterPro" id="IPR036961">
    <property type="entry name" value="Kinesin_motor_dom_sf"/>
</dbReference>
<dbReference type="InterPro" id="IPR001609">
    <property type="entry name" value="Myosin_head_motor_dom-like"/>
</dbReference>
<dbReference type="InterPro" id="IPR010926">
    <property type="entry name" value="Myosin_TH1"/>
</dbReference>
<dbReference type="InterPro" id="IPR036072">
    <property type="entry name" value="MYSc_Myo1"/>
</dbReference>
<dbReference type="InterPro" id="IPR027417">
    <property type="entry name" value="P-loop_NTPase"/>
</dbReference>
<dbReference type="InterPro" id="IPR036028">
    <property type="entry name" value="SH3-like_dom_sf"/>
</dbReference>
<dbReference type="InterPro" id="IPR001452">
    <property type="entry name" value="SH3_domain"/>
</dbReference>
<dbReference type="PANTHER" id="PTHR13140">
    <property type="entry name" value="MYOSIN"/>
    <property type="match status" value="1"/>
</dbReference>
<dbReference type="PANTHER" id="PTHR13140:SF837">
    <property type="entry name" value="MYOSIN-3-RELATED"/>
    <property type="match status" value="1"/>
</dbReference>
<dbReference type="Pfam" id="PF00063">
    <property type="entry name" value="Myosin_head"/>
    <property type="match status" value="1"/>
</dbReference>
<dbReference type="Pfam" id="PF06017">
    <property type="entry name" value="Myosin_TH1"/>
    <property type="match status" value="1"/>
</dbReference>
<dbReference type="Pfam" id="PF14604">
    <property type="entry name" value="SH3_9"/>
    <property type="match status" value="1"/>
</dbReference>
<dbReference type="PRINTS" id="PR00193">
    <property type="entry name" value="MYOSINHEAVY"/>
</dbReference>
<dbReference type="SMART" id="SM00242">
    <property type="entry name" value="MYSc"/>
    <property type="match status" value="1"/>
</dbReference>
<dbReference type="SMART" id="SM00326">
    <property type="entry name" value="SH3"/>
    <property type="match status" value="1"/>
</dbReference>
<dbReference type="SUPFAM" id="SSF52540">
    <property type="entry name" value="P-loop containing nucleoside triphosphate hydrolases"/>
    <property type="match status" value="1"/>
</dbReference>
<dbReference type="SUPFAM" id="SSF50044">
    <property type="entry name" value="SH3-domain"/>
    <property type="match status" value="1"/>
</dbReference>
<dbReference type="PROSITE" id="PS51456">
    <property type="entry name" value="MYOSIN_MOTOR"/>
    <property type="match status" value="1"/>
</dbReference>
<dbReference type="PROSITE" id="PS50002">
    <property type="entry name" value="SH3"/>
    <property type="match status" value="1"/>
</dbReference>
<dbReference type="PROSITE" id="PS51757">
    <property type="entry name" value="TH1"/>
    <property type="match status" value="1"/>
</dbReference>
<proteinExistence type="inferred from homology"/>
<accession>Q7Z8J6</accession>
<accession>A0A0D1DV68</accession>
<accession>Q4P701</accession>
<sequence length="1282" mass="139582">MAISKKAGAKKAGAVSKPPPSKGASSKGGVAKADWREGFKKAQAGVSDMTLLSKVTNEAINDNLQKRFQNAEIYTYIGNVLISVNPFRDLGIYTEDILQSYRGKNRLEMTPHVFAIAEGAYYNMNAYKENQCVIISGESGAGKTEAAKRIMQYIAAVSGGSNSGIQDVKDMVLATNPLLESFGCAKTLRNNNSSRHGKYLEIMFNAHGEPIGANITNYLLEKNRVVQQIHDERNFHIFYQFTKAATATHRENYGIQGPEAYAYTANSQCLDVNGIDDHADFRETISAMNTIGLTADEQDNIFRMIAAILWIGNVQYVENQEGNAEISDPGVPDFVAYLLEVDAGNVTKALTQRIMETQRGGRRGSVYEVPLNPTQAAAARDALAKAIYNNMFDWIVERINQSMNPRTQSSNVIGVLDIYGFEIFDNNSFEQLCINYVNEKLQQIFIELTLKKEQEEYAYEQIQWTPIKYFNNKIVCDLIEEKRPPGIFSALNDACATAHADPTAADNSFIQRTGMLSSNPHFDSRGTKFLIKHYAGDVMYNVQGMTDKNKDSLLKDILDLVDSSTNSYLQKLFPDRPDPNSKKRPPTAGDRIKASANALVENLMRAQPSYIRTIKPNQNKSPTEYDSQAILHQIKYLGLQENIRVRRAGFAYRNTFEKMVERFYLLSPNTSYAGEYTWQGDARSGCERILTDTGIAREEWQMGVTKAFIKNPETLFALETMRDRYWHNMAMRIQRAYRNYLRYKEECARRIQRMWKNNKEGLQYIQLRDYGHQVLAGRKERRRFSLLGLRRFMGDYLDVGGANGKGGGSAEGQMLRQATGMAAGEAVAFSSRAQLLVSRLGRSSVRSPRFLILTDKAVYILVTQLVNKQVSTTCERRINLGAISAVGLSNLRDDWLVLNVNNAEEADPILHCYFKTELVTHLLQRTNGAINVIVSNSLEYSKKKGKKAQITFRKDETVQKDDVYKSSAVSVCSGEPANSVSRPAPKKKPGLVRPITQGKLLRAGGPSNANNKPKPRAIPRSTPTPAKLPGSGAAGTARPAAAVGSASAGAGVGATRSAPRPPPPPPAAVAPSEPQVARYKALYVFATENAGEMALDKDDVVEVTQKDETGSGWWLVKKNGVEGWAPSNYLELIVQAAPKPKAAPAPPVKRAAPVAPSATTASQRPAVAAKPAFGGAAAGVVQPKPVVKTTPAGGKPHERAAAVQADAAAAPVSVMPGLGAPGGFAAVLAKKKAENAAAAAAAGAGANGKGAGAPPAVAAKPVVAPKPAGSNGRAMPPPPPRR</sequence>